<reference key="1">
    <citation type="journal article" date="2008" name="J. Bacteriol.">
        <title>Comparative genome sequence analysis of multidrug-resistant Acinetobacter baumannii.</title>
        <authorList>
            <person name="Adams M.D."/>
            <person name="Goglin K."/>
            <person name="Molyneaux N."/>
            <person name="Hujer K.M."/>
            <person name="Lavender H."/>
            <person name="Jamison J.J."/>
            <person name="MacDonald I.J."/>
            <person name="Martin K.M."/>
            <person name="Russo T."/>
            <person name="Campagnari A.A."/>
            <person name="Hujer A.M."/>
            <person name="Bonomo R.A."/>
            <person name="Gill S.R."/>
        </authorList>
    </citation>
    <scope>NUCLEOTIDE SEQUENCE [LARGE SCALE GENOMIC DNA]</scope>
    <source>
        <strain>AB0057</strain>
    </source>
</reference>
<gene>
    <name evidence="1" type="primary">murG</name>
    <name type="ordered locus">AB57_3787</name>
</gene>
<dbReference type="EC" id="2.4.1.227" evidence="1"/>
<dbReference type="EMBL" id="CP001182">
    <property type="protein sequence ID" value="ACJ43139.1"/>
    <property type="molecule type" value="Genomic_DNA"/>
</dbReference>
<dbReference type="RefSeq" id="WP_000132435.1">
    <property type="nucleotide sequence ID" value="NC_011586.2"/>
</dbReference>
<dbReference type="SMR" id="B7ICE5"/>
<dbReference type="CAZy" id="GT28">
    <property type="family name" value="Glycosyltransferase Family 28"/>
</dbReference>
<dbReference type="GeneID" id="92895579"/>
<dbReference type="KEGG" id="abn:AB57_3787"/>
<dbReference type="HOGENOM" id="CLU_037404_2_0_6"/>
<dbReference type="UniPathway" id="UPA00219"/>
<dbReference type="Proteomes" id="UP000007094">
    <property type="component" value="Chromosome"/>
</dbReference>
<dbReference type="GO" id="GO:0005886">
    <property type="term" value="C:plasma membrane"/>
    <property type="evidence" value="ECO:0007669"/>
    <property type="project" value="UniProtKB-SubCell"/>
</dbReference>
<dbReference type="GO" id="GO:0051991">
    <property type="term" value="F:UDP-N-acetyl-D-glucosamine:N-acetylmuramoyl-L-alanyl-D-glutamyl-meso-2,6-diaminopimelyl-D-alanyl-D-alanine-diphosphoundecaprenol 4-beta-N-acetylglucosaminlytransferase activity"/>
    <property type="evidence" value="ECO:0007669"/>
    <property type="project" value="RHEA"/>
</dbReference>
<dbReference type="GO" id="GO:0050511">
    <property type="term" value="F:undecaprenyldiphospho-muramoylpentapeptide beta-N-acetylglucosaminyltransferase activity"/>
    <property type="evidence" value="ECO:0007669"/>
    <property type="project" value="UniProtKB-UniRule"/>
</dbReference>
<dbReference type="GO" id="GO:0005975">
    <property type="term" value="P:carbohydrate metabolic process"/>
    <property type="evidence" value="ECO:0007669"/>
    <property type="project" value="InterPro"/>
</dbReference>
<dbReference type="GO" id="GO:0051301">
    <property type="term" value="P:cell division"/>
    <property type="evidence" value="ECO:0007669"/>
    <property type="project" value="UniProtKB-KW"/>
</dbReference>
<dbReference type="GO" id="GO:0071555">
    <property type="term" value="P:cell wall organization"/>
    <property type="evidence" value="ECO:0007669"/>
    <property type="project" value="UniProtKB-KW"/>
</dbReference>
<dbReference type="GO" id="GO:0030259">
    <property type="term" value="P:lipid glycosylation"/>
    <property type="evidence" value="ECO:0007669"/>
    <property type="project" value="UniProtKB-UniRule"/>
</dbReference>
<dbReference type="GO" id="GO:0009252">
    <property type="term" value="P:peptidoglycan biosynthetic process"/>
    <property type="evidence" value="ECO:0007669"/>
    <property type="project" value="UniProtKB-UniRule"/>
</dbReference>
<dbReference type="GO" id="GO:0008360">
    <property type="term" value="P:regulation of cell shape"/>
    <property type="evidence" value="ECO:0007669"/>
    <property type="project" value="UniProtKB-KW"/>
</dbReference>
<dbReference type="CDD" id="cd03785">
    <property type="entry name" value="GT28_MurG"/>
    <property type="match status" value="1"/>
</dbReference>
<dbReference type="Gene3D" id="3.40.50.2000">
    <property type="entry name" value="Glycogen Phosphorylase B"/>
    <property type="match status" value="2"/>
</dbReference>
<dbReference type="HAMAP" id="MF_00033">
    <property type="entry name" value="MurG"/>
    <property type="match status" value="1"/>
</dbReference>
<dbReference type="InterPro" id="IPR006009">
    <property type="entry name" value="GlcNAc_MurG"/>
</dbReference>
<dbReference type="InterPro" id="IPR007235">
    <property type="entry name" value="Glyco_trans_28_C"/>
</dbReference>
<dbReference type="InterPro" id="IPR004276">
    <property type="entry name" value="GlycoTrans_28_N"/>
</dbReference>
<dbReference type="NCBIfam" id="TIGR01133">
    <property type="entry name" value="murG"/>
    <property type="match status" value="1"/>
</dbReference>
<dbReference type="PANTHER" id="PTHR21015:SF22">
    <property type="entry name" value="GLYCOSYLTRANSFERASE"/>
    <property type="match status" value="1"/>
</dbReference>
<dbReference type="PANTHER" id="PTHR21015">
    <property type="entry name" value="UDP-N-ACETYLGLUCOSAMINE--N-ACETYLMURAMYL-(PENTAPEPTIDE) PYROPHOSPHORYL-UNDECAPRENOL N-ACETYLGLUCOSAMINE TRANSFERASE 1"/>
    <property type="match status" value="1"/>
</dbReference>
<dbReference type="Pfam" id="PF04101">
    <property type="entry name" value="Glyco_tran_28_C"/>
    <property type="match status" value="1"/>
</dbReference>
<dbReference type="Pfam" id="PF03033">
    <property type="entry name" value="Glyco_transf_28"/>
    <property type="match status" value="1"/>
</dbReference>
<dbReference type="SUPFAM" id="SSF53756">
    <property type="entry name" value="UDP-Glycosyltransferase/glycogen phosphorylase"/>
    <property type="match status" value="1"/>
</dbReference>
<sequence length="365" mass="39350">MTDSQQSKPKHVMMMAAGTGGHVFPALAVAKQLQQQGCQVSWLATPTGMENRLLKDQNIPIYQIDIQGVRGNGVIRKLAAPFKILKATFSAMRYMKQLKVDAVAGFGGYVAGPGGLAARLLGIPVLIHEQNAVAGFTNAQLSRVAKVVCEAFPNTFPASEKVVTTGNPVRREITDILSPKWRYDEREQAGKPLNILIVGGSLGAKALNERLPPALKQLEVPLNIFHQCGQQQVEATQALYADAPANLTVQVLPFIEDMAKAYSEADLIICRAGALTVTEVATAGVAAVFVPLPIAVDDHQTANAKFLADVGAAKICQQSTMTPEVLNQLFTTLMNRQLLTEMAVKARQHAQPNATQHVVDLIQKM</sequence>
<feature type="chain" id="PRO_1000116464" description="UDP-N-acetylglucosamine--N-acetylmuramyl-(pentapeptide) pyrophosphoryl-undecaprenol N-acetylglucosamine transferase">
    <location>
        <begin position="1"/>
        <end position="365"/>
    </location>
</feature>
<feature type="binding site" evidence="1">
    <location>
        <begin position="19"/>
        <end position="21"/>
    </location>
    <ligand>
        <name>UDP-N-acetyl-alpha-D-glucosamine</name>
        <dbReference type="ChEBI" id="CHEBI:57705"/>
    </ligand>
</feature>
<feature type="binding site" evidence="1">
    <location>
        <position position="131"/>
    </location>
    <ligand>
        <name>UDP-N-acetyl-alpha-D-glucosamine</name>
        <dbReference type="ChEBI" id="CHEBI:57705"/>
    </ligand>
</feature>
<feature type="binding site" evidence="1">
    <location>
        <position position="170"/>
    </location>
    <ligand>
        <name>UDP-N-acetyl-alpha-D-glucosamine</name>
        <dbReference type="ChEBI" id="CHEBI:57705"/>
    </ligand>
</feature>
<feature type="binding site" evidence="1">
    <location>
        <position position="201"/>
    </location>
    <ligand>
        <name>UDP-N-acetyl-alpha-D-glucosamine</name>
        <dbReference type="ChEBI" id="CHEBI:57705"/>
    </ligand>
</feature>
<feature type="binding site" evidence="1">
    <location>
        <position position="255"/>
    </location>
    <ligand>
        <name>UDP-N-acetyl-alpha-D-glucosamine</name>
        <dbReference type="ChEBI" id="CHEBI:57705"/>
    </ligand>
</feature>
<feature type="binding site" evidence="1">
    <location>
        <begin position="274"/>
        <end position="279"/>
    </location>
    <ligand>
        <name>UDP-N-acetyl-alpha-D-glucosamine</name>
        <dbReference type="ChEBI" id="CHEBI:57705"/>
    </ligand>
</feature>
<feature type="binding site" evidence="1">
    <location>
        <position position="300"/>
    </location>
    <ligand>
        <name>UDP-N-acetyl-alpha-D-glucosamine</name>
        <dbReference type="ChEBI" id="CHEBI:57705"/>
    </ligand>
</feature>
<proteinExistence type="inferred from homology"/>
<comment type="function">
    <text evidence="1">Cell wall formation. Catalyzes the transfer of a GlcNAc subunit on undecaprenyl-pyrophosphoryl-MurNAc-pentapeptide (lipid intermediate I) to form undecaprenyl-pyrophosphoryl-MurNAc-(pentapeptide)GlcNAc (lipid intermediate II).</text>
</comment>
<comment type="catalytic activity">
    <reaction evidence="1">
        <text>di-trans,octa-cis-undecaprenyl diphospho-N-acetyl-alpha-D-muramoyl-L-alanyl-D-glutamyl-meso-2,6-diaminopimeloyl-D-alanyl-D-alanine + UDP-N-acetyl-alpha-D-glucosamine = di-trans,octa-cis-undecaprenyl diphospho-[N-acetyl-alpha-D-glucosaminyl-(1-&gt;4)]-N-acetyl-alpha-D-muramoyl-L-alanyl-D-glutamyl-meso-2,6-diaminopimeloyl-D-alanyl-D-alanine + UDP + H(+)</text>
        <dbReference type="Rhea" id="RHEA:31227"/>
        <dbReference type="ChEBI" id="CHEBI:15378"/>
        <dbReference type="ChEBI" id="CHEBI:57705"/>
        <dbReference type="ChEBI" id="CHEBI:58223"/>
        <dbReference type="ChEBI" id="CHEBI:61387"/>
        <dbReference type="ChEBI" id="CHEBI:61388"/>
        <dbReference type="EC" id="2.4.1.227"/>
    </reaction>
</comment>
<comment type="pathway">
    <text evidence="1">Cell wall biogenesis; peptidoglycan biosynthesis.</text>
</comment>
<comment type="subcellular location">
    <subcellularLocation>
        <location evidence="1">Cell inner membrane</location>
        <topology evidence="1">Peripheral membrane protein</topology>
        <orientation evidence="1">Cytoplasmic side</orientation>
    </subcellularLocation>
</comment>
<comment type="similarity">
    <text evidence="1">Belongs to the glycosyltransferase 28 family. MurG subfamily.</text>
</comment>
<accession>B7ICE5</accession>
<protein>
    <recommendedName>
        <fullName evidence="1">UDP-N-acetylglucosamine--N-acetylmuramyl-(pentapeptide) pyrophosphoryl-undecaprenol N-acetylglucosamine transferase</fullName>
        <ecNumber evidence="1">2.4.1.227</ecNumber>
    </recommendedName>
    <alternativeName>
        <fullName evidence="1">Undecaprenyl-PP-MurNAc-pentapeptide-UDPGlcNAc GlcNAc transferase</fullName>
    </alternativeName>
</protein>
<keyword id="KW-0131">Cell cycle</keyword>
<keyword id="KW-0132">Cell division</keyword>
<keyword id="KW-0997">Cell inner membrane</keyword>
<keyword id="KW-1003">Cell membrane</keyword>
<keyword id="KW-0133">Cell shape</keyword>
<keyword id="KW-0961">Cell wall biogenesis/degradation</keyword>
<keyword id="KW-0328">Glycosyltransferase</keyword>
<keyword id="KW-0472">Membrane</keyword>
<keyword id="KW-0573">Peptidoglycan synthesis</keyword>
<keyword id="KW-0808">Transferase</keyword>
<evidence type="ECO:0000255" key="1">
    <source>
        <dbReference type="HAMAP-Rule" id="MF_00033"/>
    </source>
</evidence>
<name>MURG_ACIB5</name>
<organism>
    <name type="scientific">Acinetobacter baumannii (strain AB0057)</name>
    <dbReference type="NCBI Taxonomy" id="480119"/>
    <lineage>
        <taxon>Bacteria</taxon>
        <taxon>Pseudomonadati</taxon>
        <taxon>Pseudomonadota</taxon>
        <taxon>Gammaproteobacteria</taxon>
        <taxon>Moraxellales</taxon>
        <taxon>Moraxellaceae</taxon>
        <taxon>Acinetobacter</taxon>
        <taxon>Acinetobacter calcoaceticus/baumannii complex</taxon>
    </lineage>
</organism>